<proteinExistence type="evidence at protein level"/>
<keyword id="KW-0002">3D-structure</keyword>
<keyword id="KW-0025">Alternative splicing</keyword>
<keyword id="KW-1003">Cell membrane</keyword>
<keyword id="KW-1015">Disulfide bond</keyword>
<keyword id="KW-0297">G-protein coupled receptor</keyword>
<keyword id="KW-0325">Glycoprotein</keyword>
<keyword id="KW-0472">Membrane</keyword>
<keyword id="KW-0597">Phosphoprotein</keyword>
<keyword id="KW-1267">Proteomics identification</keyword>
<keyword id="KW-0675">Receptor</keyword>
<keyword id="KW-1185">Reference proteome</keyword>
<keyword id="KW-0807">Transducer</keyword>
<keyword id="KW-0812">Transmembrane</keyword>
<keyword id="KW-1133">Transmembrane helix</keyword>
<protein>
    <recommendedName>
        <fullName>Histamine H3 receptor</fullName>
        <shortName>H3R</shortName>
        <shortName>HH3R</shortName>
    </recommendedName>
    <alternativeName>
        <fullName>G-protein coupled receptor 97</fullName>
    </alternativeName>
</protein>
<name>HRH3_HUMAN</name>
<sequence length="445" mass="48671">MERAPPDGPLNASGALAGEAAAAGGARGFSAAWTAVLAALMALLIVATVLGNALVMLAFVADSSLRTQNNFFLLNLAISDFLVGAFCIPLYVPYVLTGRWTFGRGLCKLWLVVDYLLCTSSAFNIVLISYDRFLSVTRAVSYRAQQGDTRRAVRKMLLVWVLAFLLYGPAILSWEYLSGGSSIPEGHCYAEFFYNWYFLITASTLEFFTPFLSVTFFNLSIYLNIQRRTRLRLDGAREAAGPEPPPEAQPSPPPPPGCWGCWQKGHGEAMPLHRYGVGEAAVGAEAGEATLGGGGGGGSVASPTSSSGSSSRGTERPRSLKRGSKPSASSASLEKRMKMVSQSFTQRFRLSRDRKVAKSLAVIVSIFGLCWAPYTLLMIIRAACHGHCVPDYWYETSFWLLWANSAVNPVLYPLCHHSFRRAFTKLLCPQKLKIQPHSSLEHCWK</sequence>
<organism>
    <name type="scientific">Homo sapiens</name>
    <name type="common">Human</name>
    <dbReference type="NCBI Taxonomy" id="9606"/>
    <lineage>
        <taxon>Eukaryota</taxon>
        <taxon>Metazoa</taxon>
        <taxon>Chordata</taxon>
        <taxon>Craniata</taxon>
        <taxon>Vertebrata</taxon>
        <taxon>Euteleostomi</taxon>
        <taxon>Mammalia</taxon>
        <taxon>Eutheria</taxon>
        <taxon>Euarchontoglires</taxon>
        <taxon>Primates</taxon>
        <taxon>Haplorrhini</taxon>
        <taxon>Catarrhini</taxon>
        <taxon>Hominidae</taxon>
        <taxon>Homo</taxon>
    </lineage>
</organism>
<evidence type="ECO:0000250" key="1">
    <source>
        <dbReference type="UniProtKB" id="P58406"/>
    </source>
</evidence>
<evidence type="ECO:0000255" key="2"/>
<evidence type="ECO:0000255" key="3">
    <source>
        <dbReference type="PROSITE-ProRule" id="PRU00521"/>
    </source>
</evidence>
<evidence type="ECO:0000256" key="4">
    <source>
        <dbReference type="SAM" id="MobiDB-lite"/>
    </source>
</evidence>
<evidence type="ECO:0000269" key="5">
    <source>
    </source>
</evidence>
<evidence type="ECO:0000303" key="6">
    <source>
    </source>
</evidence>
<evidence type="ECO:0000303" key="7">
    <source ref="5"/>
</evidence>
<evidence type="ECO:0000305" key="8"/>
<evidence type="ECO:0007829" key="9">
    <source>
        <dbReference type="PDB" id="7F61"/>
    </source>
</evidence>
<comment type="function">
    <text>The H3 subclass of histamine receptors could mediate the histamine signals in CNS and peripheral nervous system. Signals through the inhibition of adenylate cyclase and displays high constitutive activity (spontaneous activity in the absence of agonist). Agonist stimulation of isoform 3 neither modified adenylate cyclase activity nor induced intracellular calcium mobilization.</text>
</comment>
<comment type="subcellular location">
    <subcellularLocation>
        <location>Cell membrane</location>
        <topology>Multi-pass membrane protein</topology>
    </subcellularLocation>
</comment>
<comment type="alternative products">
    <event type="alternative splicing"/>
    <isoform>
        <id>Q9Y5N1-1</id>
        <name>1</name>
        <sequence type="displayed"/>
    </isoform>
    <isoform>
        <id>Q9Y5N1-2</id>
        <name>2</name>
        <sequence type="described" ref="VSP_001886"/>
    </isoform>
    <isoform>
        <id>Q9Y5N1-3</id>
        <name>3</name>
        <name>H3S</name>
        <sequence type="described" ref="VSP_001885"/>
    </isoform>
    <isoform>
        <id>Q9Y5N1-4</id>
        <name>4</name>
        <sequence type="described" ref="VSP_001881"/>
    </isoform>
    <isoform>
        <id>Q9Y5N1-5</id>
        <name>5</name>
        <sequence type="described" ref="VSP_001882"/>
    </isoform>
    <isoform>
        <id>Q9Y5N1-6</id>
        <name>6</name>
        <sequence type="described" ref="VSP_001883"/>
    </isoform>
    <isoform>
        <id>Q9Y5N1-7</id>
        <name>7</name>
        <sequence type="described" ref="VSP_001884"/>
    </isoform>
    <text>Additional isoforms seem to exist.</text>
</comment>
<comment type="tissue specificity">
    <text>Expressed predominantly in the CNS, with the greatest expression in the thalamus and caudate nucleus. The various isoforms are mainly coexpressed in brain, but their relative expression level varies in a region-specific manner. Isoform 3 and isoform 7 are highly expressed in the thalamus, caudate nucleus and cerebellum while isoform 5 and isoform 6 show a poor expression. Isoform 5 and isoform 6 show a high expression in the amygdala, substantia nigra, cerebral cortex and hypothalamus. Isoform 7 is not found in hypothalamus or substantia nigra.</text>
</comment>
<comment type="miscellaneous">
    <text>Does not bind to cimetidine and tripolidine. Shows modest affinity for thioperamide, imetit, N-alpha-methylhistamine and R(-)-alpha-methylhistamine. Isoform 4 is unable to bind to iodoproxyfan while isoforms 1 and 3 bind it with high affinity.</text>
</comment>
<comment type="similarity">
    <text evidence="3">Belongs to the G-protein coupled receptor 1 family.</text>
</comment>
<feature type="chain" id="PRO_0000069690" description="Histamine H3 receptor">
    <location>
        <begin position="1"/>
        <end position="445"/>
    </location>
</feature>
<feature type="topological domain" description="Extracellular" evidence="2">
    <location>
        <begin position="1"/>
        <end position="39"/>
    </location>
</feature>
<feature type="transmembrane region" description="Helical; Name=1" evidence="2">
    <location>
        <begin position="40"/>
        <end position="60"/>
    </location>
</feature>
<feature type="topological domain" description="Cytoplasmic" evidence="2">
    <location>
        <begin position="61"/>
        <end position="70"/>
    </location>
</feature>
<feature type="transmembrane region" description="Helical; Name=2" evidence="2">
    <location>
        <begin position="71"/>
        <end position="91"/>
    </location>
</feature>
<feature type="topological domain" description="Extracellular" evidence="2">
    <location>
        <begin position="92"/>
        <end position="108"/>
    </location>
</feature>
<feature type="transmembrane region" description="Helical; Name=3" evidence="2">
    <location>
        <begin position="109"/>
        <end position="129"/>
    </location>
</feature>
<feature type="topological domain" description="Cytoplasmic" evidence="2">
    <location>
        <begin position="130"/>
        <end position="156"/>
    </location>
</feature>
<feature type="transmembrane region" description="Helical; Name=4" evidence="2">
    <location>
        <begin position="157"/>
        <end position="177"/>
    </location>
</feature>
<feature type="topological domain" description="Extracellular" evidence="2">
    <location>
        <begin position="178"/>
        <end position="196"/>
    </location>
</feature>
<feature type="transmembrane region" description="Helical; Name=5" evidence="2">
    <location>
        <begin position="197"/>
        <end position="217"/>
    </location>
</feature>
<feature type="topological domain" description="Cytoplasmic" evidence="2">
    <location>
        <begin position="218"/>
        <end position="359"/>
    </location>
</feature>
<feature type="transmembrane region" description="Helical; Name=6" evidence="2">
    <location>
        <begin position="360"/>
        <end position="380"/>
    </location>
</feature>
<feature type="topological domain" description="Extracellular" evidence="2">
    <location>
        <begin position="381"/>
        <end position="395"/>
    </location>
</feature>
<feature type="transmembrane region" description="Helical; Name=7" evidence="2">
    <location>
        <begin position="396"/>
        <end position="416"/>
    </location>
</feature>
<feature type="topological domain" description="Cytoplasmic" evidence="2">
    <location>
        <begin position="417"/>
        <end position="445"/>
    </location>
</feature>
<feature type="region of interest" description="Disordered" evidence="4">
    <location>
        <begin position="237"/>
        <end position="260"/>
    </location>
</feature>
<feature type="region of interest" description="Disordered" evidence="4">
    <location>
        <begin position="288"/>
        <end position="336"/>
    </location>
</feature>
<feature type="compositionally biased region" description="Pro residues" evidence="4">
    <location>
        <begin position="242"/>
        <end position="257"/>
    </location>
</feature>
<feature type="compositionally biased region" description="Gly residues" evidence="4">
    <location>
        <begin position="290"/>
        <end position="299"/>
    </location>
</feature>
<feature type="compositionally biased region" description="Low complexity" evidence="4">
    <location>
        <begin position="300"/>
        <end position="312"/>
    </location>
</feature>
<feature type="modified residue" description="Phosphoserine" evidence="1">
    <location>
        <position position="439"/>
    </location>
</feature>
<feature type="glycosylation site" description="N-linked (GlcNAc...) asparagine" evidence="2">
    <location>
        <position position="11"/>
    </location>
</feature>
<feature type="disulfide bond" evidence="3">
    <location>
        <begin position="107"/>
        <end position="188"/>
    </location>
</feature>
<feature type="splice variant" id="VSP_001881" description="In isoform 4." evidence="8">
    <location>
        <begin position="85"/>
        <end position="98"/>
    </location>
</feature>
<feature type="splice variant" id="VSP_001882" description="In isoform 5." evidence="8">
    <location>
        <begin position="197"/>
        <end position="315"/>
    </location>
</feature>
<feature type="splice variant" id="VSP_001883" description="In isoform 6." evidence="8">
    <location>
        <begin position="227"/>
        <end position="342"/>
    </location>
</feature>
<feature type="splice variant" id="VSP_001884" description="In isoform 7." evidence="8">
    <location>
        <begin position="234"/>
        <end position="263"/>
    </location>
</feature>
<feature type="splice variant" id="VSP_001885" description="In isoform 3." evidence="7">
    <location>
        <begin position="274"/>
        <end position="353"/>
    </location>
</feature>
<feature type="splice variant" id="VSP_001886" description="In isoform 2." evidence="6">
    <original>K</original>
    <variation>KKMKKKTCL</variation>
    <location>
        <position position="445"/>
    </location>
</feature>
<feature type="sequence variant" id="VAR_012235" description="In a Shy-Drager syndrome patient; uncertain significance; dbSNP:rs752380770." evidence="5">
    <original>A</original>
    <variation>V</variation>
    <location>
        <position position="280"/>
    </location>
</feature>
<feature type="sequence conflict" description="In Ref. 1 and 5." evidence="8" ref="1 5">
    <original>E</original>
    <variation>D</variation>
    <location>
        <position position="19"/>
    </location>
</feature>
<feature type="helix" evidence="9">
    <location>
        <begin position="31"/>
        <end position="61"/>
    </location>
</feature>
<feature type="helix" evidence="9">
    <location>
        <begin position="63"/>
        <end position="65"/>
    </location>
</feature>
<feature type="helix" evidence="9">
    <location>
        <begin position="68"/>
        <end position="85"/>
    </location>
</feature>
<feature type="helix" evidence="9">
    <location>
        <begin position="87"/>
        <end position="97"/>
    </location>
</feature>
<feature type="helix" evidence="9">
    <location>
        <begin position="103"/>
        <end position="137"/>
    </location>
</feature>
<feature type="helix" evidence="9">
    <location>
        <begin position="139"/>
        <end position="145"/>
    </location>
</feature>
<feature type="helix" evidence="9">
    <location>
        <begin position="149"/>
        <end position="177"/>
    </location>
</feature>
<feature type="turn" evidence="9">
    <location>
        <begin position="191"/>
        <end position="194"/>
    </location>
</feature>
<feature type="helix" evidence="9">
    <location>
        <begin position="196"/>
        <end position="229"/>
    </location>
</feature>
<feature type="helix" evidence="9">
    <location>
        <begin position="235"/>
        <end position="240"/>
    </location>
</feature>
<feature type="helix" evidence="9">
    <location>
        <begin position="348"/>
        <end position="383"/>
    </location>
</feature>
<feature type="turn" evidence="9">
    <location>
        <begin position="384"/>
        <end position="386"/>
    </location>
</feature>
<feature type="strand" evidence="9">
    <location>
        <begin position="387"/>
        <end position="389"/>
    </location>
</feature>
<feature type="helix" evidence="9">
    <location>
        <begin position="391"/>
        <end position="415"/>
    </location>
</feature>
<feature type="helix" evidence="9">
    <location>
        <begin position="417"/>
        <end position="427"/>
    </location>
</feature>
<feature type="helix" evidence="9">
    <location>
        <begin position="429"/>
        <end position="431"/>
    </location>
</feature>
<gene>
    <name type="primary">HRH3</name>
    <name type="synonym">GPCR97</name>
</gene>
<dbReference type="EMBL" id="AF140538">
    <property type="protein sequence ID" value="AAD38151.1"/>
    <property type="molecule type" value="mRNA"/>
</dbReference>
<dbReference type="EMBL" id="AB045369">
    <property type="protein sequence ID" value="BAB20090.1"/>
    <property type="molecule type" value="mRNA"/>
</dbReference>
<dbReference type="EMBL" id="AB019000">
    <property type="protein sequence ID" value="BAB17030.1"/>
    <property type="molecule type" value="mRNA"/>
</dbReference>
<dbReference type="EMBL" id="AJ296652">
    <property type="protein sequence ID" value="CAC51025.1"/>
    <property type="molecule type" value="Genomic_DNA"/>
</dbReference>
<dbReference type="EMBL" id="AJ278250">
    <property type="protein sequence ID" value="CAC39434.1"/>
    <property type="molecule type" value="Genomic_DNA"/>
</dbReference>
<dbReference type="EMBL" id="AF363791">
    <property type="protein sequence ID" value="AAK50040.1"/>
    <property type="molecule type" value="mRNA"/>
</dbReference>
<dbReference type="EMBL" id="AL078633">
    <property type="status" value="NOT_ANNOTATED_CDS"/>
    <property type="molecule type" value="Genomic_DNA"/>
</dbReference>
<dbReference type="EMBL" id="BC096840">
    <property type="protein sequence ID" value="AAH96840.1"/>
    <property type="molecule type" value="mRNA"/>
</dbReference>
<dbReference type="CCDS" id="CCDS13493.1">
    <molecule id="Q9Y5N1-1"/>
</dbReference>
<dbReference type="RefSeq" id="NP_009163.2">
    <molecule id="Q9Y5N1-1"/>
    <property type="nucleotide sequence ID" value="NM_007232.3"/>
</dbReference>
<dbReference type="RefSeq" id="XP_005260323.1">
    <molecule id="Q9Y5N1-2"/>
    <property type="nucleotide sequence ID" value="XM_005260266.4"/>
</dbReference>
<dbReference type="RefSeq" id="XP_054178891.1">
    <molecule id="Q9Y5N1-2"/>
    <property type="nucleotide sequence ID" value="XM_054322916.1"/>
</dbReference>
<dbReference type="PDB" id="7F61">
    <property type="method" value="X-ray"/>
    <property type="resolution" value="2.60 A"/>
    <property type="chains" value="A=27-433"/>
</dbReference>
<dbReference type="PDB" id="8YN5">
    <property type="method" value="EM"/>
    <property type="resolution" value="2.70 A"/>
    <property type="chains" value="R=1-445"/>
</dbReference>
<dbReference type="PDB" id="8YN6">
    <property type="method" value="EM"/>
    <property type="resolution" value="2.77 A"/>
    <property type="chains" value="R=1-445"/>
</dbReference>
<dbReference type="PDB" id="8YN7">
    <property type="method" value="EM"/>
    <property type="resolution" value="2.77 A"/>
    <property type="chains" value="R=1-445"/>
</dbReference>
<dbReference type="PDB" id="8YN8">
    <property type="method" value="EM"/>
    <property type="resolution" value="2.77 A"/>
    <property type="chains" value="R=1-445"/>
</dbReference>
<dbReference type="PDB" id="8YUU">
    <property type="method" value="EM"/>
    <property type="resolution" value="2.70 A"/>
    <property type="chains" value="R=1-445"/>
</dbReference>
<dbReference type="PDB" id="8YUV">
    <property type="method" value="EM"/>
    <property type="resolution" value="3.00 A"/>
    <property type="chains" value="R=1-445"/>
</dbReference>
<dbReference type="PDBsum" id="7F61"/>
<dbReference type="PDBsum" id="8YN5"/>
<dbReference type="PDBsum" id="8YN6"/>
<dbReference type="PDBsum" id="8YN7"/>
<dbReference type="PDBsum" id="8YN8"/>
<dbReference type="PDBsum" id="8YUU"/>
<dbReference type="PDBsum" id="8YUV"/>
<dbReference type="EMDB" id="EMD-39415"/>
<dbReference type="EMDB" id="EMD-39416"/>
<dbReference type="EMDB" id="EMD-39417"/>
<dbReference type="EMDB" id="EMD-39418"/>
<dbReference type="EMDB" id="EMD-39583"/>
<dbReference type="EMDB" id="EMD-39584"/>
<dbReference type="SMR" id="Q9Y5N1"/>
<dbReference type="BioGRID" id="116416">
    <property type="interactions" value="4"/>
</dbReference>
<dbReference type="CORUM" id="Q9Y5N1"/>
<dbReference type="DIP" id="DIP-61456N"/>
<dbReference type="FunCoup" id="Q9Y5N1">
    <property type="interactions" value="626"/>
</dbReference>
<dbReference type="IntAct" id="Q9Y5N1">
    <property type="interactions" value="2"/>
</dbReference>
<dbReference type="STRING" id="9606.ENSP00000342560"/>
<dbReference type="BindingDB" id="Q9Y5N1"/>
<dbReference type="ChEMBL" id="CHEMBL264"/>
<dbReference type="DrugBank" id="DB15192">
    <property type="generic name" value="ABT-288"/>
</dbReference>
<dbReference type="DrugBank" id="DB01238">
    <property type="generic name" value="Aripiprazole"/>
</dbReference>
<dbReference type="DrugBank" id="DB12299">
    <property type="generic name" value="Bavisant"/>
</dbReference>
<dbReference type="DrugBank" id="DB06698">
    <property type="generic name" value="Betahistine"/>
</dbReference>
<dbReference type="DrugBank" id="DB12806">
    <property type="generic name" value="GSK-1004723"/>
</dbReference>
<dbReference type="DrugBank" id="DB15120">
    <property type="generic name" value="GSK-239512"/>
</dbReference>
<dbReference type="DrugBank" id="DB05381">
    <property type="generic name" value="Histamine"/>
</dbReference>
<dbReference type="DrugBank" id="DB12900">
    <property type="generic name" value="Irdabisant"/>
</dbReference>
<dbReference type="DrugBank" id="DB17087">
    <property type="generic name" value="JNJ-17216498"/>
</dbReference>
<dbReference type="DrugBank" id="DB12929">
    <property type="generic name" value="JNJ-39220675"/>
</dbReference>
<dbReference type="DrugBank" id="DB11910">
    <property type="generic name" value="MK-0249"/>
</dbReference>
<dbReference type="DrugBank" id="DB05080">
    <property type="generic name" value="OBE101"/>
</dbReference>
<dbReference type="DrugBank" id="DB00768">
    <property type="generic name" value="Olopatadine"/>
</dbReference>
<dbReference type="DrugBank" id="DB11642">
    <property type="generic name" value="Pitolisant"/>
</dbReference>
<dbReference type="DrugBank" id="DB16893">
    <property type="generic name" value="S-38093"/>
</dbReference>
<dbReference type="DrugBank" id="DB14835">
    <property type="generic name" value="SUVN-G3031"/>
</dbReference>
<dbReference type="DrugCentral" id="Q9Y5N1"/>
<dbReference type="GuidetoPHARMACOLOGY" id="264"/>
<dbReference type="GlyCosmos" id="Q9Y5N1">
    <property type="glycosylation" value="1 site, No reported glycans"/>
</dbReference>
<dbReference type="GlyGen" id="Q9Y5N1">
    <property type="glycosylation" value="1 site"/>
</dbReference>
<dbReference type="PhosphoSitePlus" id="Q9Y5N1"/>
<dbReference type="BioMuta" id="HRH3"/>
<dbReference type="DMDM" id="17367264"/>
<dbReference type="MassIVE" id="Q9Y5N1"/>
<dbReference type="PaxDb" id="9606-ENSP00000342560"/>
<dbReference type="PeptideAtlas" id="Q9Y5N1"/>
<dbReference type="Antibodypedia" id="14714">
    <property type="antibodies" value="484 antibodies from 35 providers"/>
</dbReference>
<dbReference type="DNASU" id="11255"/>
<dbReference type="Ensembl" id="ENST00000340177.10">
    <molecule id="Q9Y5N1-1"/>
    <property type="protein sequence ID" value="ENSP00000342560.5"/>
    <property type="gene ID" value="ENSG00000101180.17"/>
</dbReference>
<dbReference type="GeneID" id="11255"/>
<dbReference type="KEGG" id="hsa:11255"/>
<dbReference type="MANE-Select" id="ENST00000340177.10">
    <property type="protein sequence ID" value="ENSP00000342560.5"/>
    <property type="RefSeq nucleotide sequence ID" value="NM_007232.3"/>
    <property type="RefSeq protein sequence ID" value="NP_009163.2"/>
</dbReference>
<dbReference type="UCSC" id="uc002ycf.3">
    <molecule id="Q9Y5N1-1"/>
    <property type="organism name" value="human"/>
</dbReference>
<dbReference type="AGR" id="HGNC:5184"/>
<dbReference type="CTD" id="11255"/>
<dbReference type="DisGeNET" id="11255"/>
<dbReference type="GeneCards" id="HRH3"/>
<dbReference type="HGNC" id="HGNC:5184">
    <property type="gene designation" value="HRH3"/>
</dbReference>
<dbReference type="HPA" id="ENSG00000101180">
    <property type="expression patterns" value="Tissue enriched (brain)"/>
</dbReference>
<dbReference type="MIM" id="604525">
    <property type="type" value="gene"/>
</dbReference>
<dbReference type="neXtProt" id="NX_Q9Y5N1"/>
<dbReference type="OpenTargets" id="ENSG00000101180"/>
<dbReference type="PharmGKB" id="PA29458"/>
<dbReference type="VEuPathDB" id="HostDB:ENSG00000101180"/>
<dbReference type="eggNOG" id="KOG3656">
    <property type="taxonomic scope" value="Eukaryota"/>
</dbReference>
<dbReference type="GeneTree" id="ENSGT00940000161502"/>
<dbReference type="InParanoid" id="Q9Y5N1"/>
<dbReference type="OMA" id="CWEWEQK"/>
<dbReference type="OrthoDB" id="10071887at2759"/>
<dbReference type="PAN-GO" id="Q9Y5N1">
    <property type="GO annotations" value="12 GO annotations based on evolutionary models"/>
</dbReference>
<dbReference type="PhylomeDB" id="Q9Y5N1"/>
<dbReference type="TreeFam" id="TF351747"/>
<dbReference type="PathwayCommons" id="Q9Y5N1"/>
<dbReference type="Reactome" id="R-HSA-390650">
    <property type="pathway name" value="Histamine receptors"/>
</dbReference>
<dbReference type="SignaLink" id="Q9Y5N1"/>
<dbReference type="SIGNOR" id="Q9Y5N1"/>
<dbReference type="BioGRID-ORCS" id="11255">
    <property type="hits" value="13 hits in 1158 CRISPR screens"/>
</dbReference>
<dbReference type="ChiTaRS" id="HRH3">
    <property type="organism name" value="human"/>
</dbReference>
<dbReference type="GeneWiki" id="Histamine_H3_receptor"/>
<dbReference type="GenomeRNAi" id="11255"/>
<dbReference type="Pharos" id="Q9Y5N1">
    <property type="development level" value="Tclin"/>
</dbReference>
<dbReference type="PRO" id="PR:Q9Y5N1"/>
<dbReference type="Proteomes" id="UP000005640">
    <property type="component" value="Chromosome 20"/>
</dbReference>
<dbReference type="RNAct" id="Q9Y5N1">
    <property type="molecule type" value="protein"/>
</dbReference>
<dbReference type="Bgee" id="ENSG00000101180">
    <property type="expression patterns" value="Expressed in putamen and 68 other cell types or tissues"/>
</dbReference>
<dbReference type="ExpressionAtlas" id="Q9Y5N1">
    <property type="expression patterns" value="baseline and differential"/>
</dbReference>
<dbReference type="GO" id="GO:0030425">
    <property type="term" value="C:dendrite"/>
    <property type="evidence" value="ECO:0000318"/>
    <property type="project" value="GO_Central"/>
</dbReference>
<dbReference type="GO" id="GO:0005886">
    <property type="term" value="C:plasma membrane"/>
    <property type="evidence" value="ECO:0000318"/>
    <property type="project" value="GO_Central"/>
</dbReference>
<dbReference type="GO" id="GO:0098793">
    <property type="term" value="C:presynapse"/>
    <property type="evidence" value="ECO:0007669"/>
    <property type="project" value="GOC"/>
</dbReference>
<dbReference type="GO" id="GO:0045202">
    <property type="term" value="C:synapse"/>
    <property type="evidence" value="ECO:0000318"/>
    <property type="project" value="GO_Central"/>
</dbReference>
<dbReference type="GO" id="GO:0004969">
    <property type="term" value="F:histamine receptor activity"/>
    <property type="evidence" value="ECO:0000318"/>
    <property type="project" value="GO_Central"/>
</dbReference>
<dbReference type="GO" id="GO:0030594">
    <property type="term" value="F:neurotransmitter receptor activity"/>
    <property type="evidence" value="ECO:0000318"/>
    <property type="project" value="GO_Central"/>
</dbReference>
<dbReference type="GO" id="GO:0007197">
    <property type="term" value="P:adenylate cyclase-inhibiting G protein-coupled acetylcholine receptor signaling pathway"/>
    <property type="evidence" value="ECO:0000318"/>
    <property type="project" value="GO_Central"/>
</dbReference>
<dbReference type="GO" id="GO:0007268">
    <property type="term" value="P:chemical synaptic transmission"/>
    <property type="evidence" value="ECO:0000318"/>
    <property type="project" value="GO_Central"/>
</dbReference>
<dbReference type="GO" id="GO:0007187">
    <property type="term" value="P:G protein-coupled receptor signaling pathway, coupled to cyclic nucleotide second messenger"/>
    <property type="evidence" value="ECO:0000318"/>
    <property type="project" value="GO_Central"/>
</dbReference>
<dbReference type="GO" id="GO:0007269">
    <property type="term" value="P:neurotransmitter secretion"/>
    <property type="evidence" value="ECO:0000304"/>
    <property type="project" value="ProtInc"/>
</dbReference>
<dbReference type="FunFam" id="1.20.1070.10:FF:000138">
    <property type="entry name" value="histamine H3 receptor"/>
    <property type="match status" value="1"/>
</dbReference>
<dbReference type="Gene3D" id="1.20.1070.10">
    <property type="entry name" value="Rhodopsin 7-helix transmembrane proteins"/>
    <property type="match status" value="1"/>
</dbReference>
<dbReference type="InterPro" id="IPR000276">
    <property type="entry name" value="GPCR_Rhodpsn"/>
</dbReference>
<dbReference type="InterPro" id="IPR017452">
    <property type="entry name" value="GPCR_Rhodpsn_7TM"/>
</dbReference>
<dbReference type="InterPro" id="IPR003980">
    <property type="entry name" value="Histamine_H3_rcpt"/>
</dbReference>
<dbReference type="PANTHER" id="PTHR24247">
    <property type="entry name" value="5-HYDROXYTRYPTAMINE RECEPTOR"/>
    <property type="match status" value="1"/>
</dbReference>
<dbReference type="PANTHER" id="PTHR24247:SF194">
    <property type="entry name" value="HISTAMINE H3 RECEPTOR"/>
    <property type="match status" value="1"/>
</dbReference>
<dbReference type="Pfam" id="PF00001">
    <property type="entry name" value="7tm_1"/>
    <property type="match status" value="1"/>
</dbReference>
<dbReference type="PRINTS" id="PR00237">
    <property type="entry name" value="GPCRRHODOPSN"/>
</dbReference>
<dbReference type="PRINTS" id="PR01471">
    <property type="entry name" value="HISTAMINEH3R"/>
</dbReference>
<dbReference type="SUPFAM" id="SSF81321">
    <property type="entry name" value="Family A G protein-coupled receptor-like"/>
    <property type="match status" value="1"/>
</dbReference>
<dbReference type="PROSITE" id="PS00237">
    <property type="entry name" value="G_PROTEIN_RECEP_F1_1"/>
    <property type="match status" value="1"/>
</dbReference>
<dbReference type="PROSITE" id="PS50262">
    <property type="entry name" value="G_PROTEIN_RECEP_F1_2"/>
    <property type="match status" value="1"/>
</dbReference>
<accession>Q9Y5N1</accession>
<accession>Q4QRI7</accession>
<accession>Q9GZX2</accession>
<accession>Q9H4K8</accession>
<reference key="1">
    <citation type="journal article" date="1999" name="Mol. Pharmacol.">
        <title>Cloning and functional expression of the human histamine H3 receptor.</title>
        <authorList>
            <person name="Lovenberg T.W."/>
            <person name="Roland B.L."/>
            <person name="Wilson S.J."/>
            <person name="Jiang X."/>
            <person name="Pyati J."/>
            <person name="Huvar A."/>
            <person name="Jackson M.R."/>
            <person name="Erlander M.G."/>
        </authorList>
    </citation>
    <scope>NUCLEOTIDE SEQUENCE [MRNA] (ISOFORM 1)</scope>
    <source>
        <tissue>Thalamus</tissue>
    </source>
</reference>
<reference key="2">
    <citation type="journal article" date="2000" name="Biochem. Biophys. Res. Commun.">
        <title>Molecular cloning and characterization of a new human histamine receptor, HH4R.</title>
        <authorList>
            <person name="Nakamura T."/>
            <person name="Itadani H."/>
            <person name="Hidaka Y."/>
            <person name="Ohta M."/>
            <person name="Tanaka K."/>
        </authorList>
    </citation>
    <scope>NUCLEOTIDE SEQUENCE [MRNA] (ISOFORM 2)</scope>
    <scope>CHARACTERIZATION</scope>
</reference>
<reference key="3">
    <citation type="journal article" date="2001" name="Biochem. J.">
        <title>Genomic organization and characterization of splice variants of the human histamine H3 receptor.</title>
        <authorList>
            <person name="Coge F."/>
            <person name="Guenin S.-P."/>
            <person name="Audinot V."/>
            <person name="Renouard-Try A."/>
            <person name="Beauverger P."/>
            <person name="Macia C."/>
            <person name="Ouvry C."/>
            <person name="Nagel N."/>
            <person name="Rique H."/>
            <person name="Boutin J.A."/>
            <person name="Galizzi J.-P."/>
        </authorList>
    </citation>
    <scope>NUCLEOTIDE SEQUENCE [GENOMIC DNA] (ISOFORMS 1; 3; 4; 5; 6 AND 7)</scope>
    <source>
        <tissue>Thalamus</tissue>
    </source>
</reference>
<reference key="4">
    <citation type="journal article" date="2002" name="J. Neural Transm.">
        <title>Structure of the human histamine H3 receptor gene (HRH3) and identification of naturally occurring variations.</title>
        <authorList>
            <person name="Wiedemann P."/>
            <person name="Boenisch H."/>
            <person name="Oerters F."/>
            <person name="Bruess M."/>
        </authorList>
    </citation>
    <scope>NUCLEOTIDE SEQUENCE [GENOMIC DNA]</scope>
    <scope>VARIANT VAL-280</scope>
    <source>
        <tissue>Blood</tissue>
    </source>
</reference>
<reference key="5">
    <citation type="submission" date="2001-03" db="EMBL/GenBank/DDBJ databases">
        <title>Cloning and functional expression of the human histamine H3S receptor.</title>
        <authorList>
            <person name="Ullmer C."/>
            <person name="Zirwes E."/>
            <person name="Lubbert H."/>
        </authorList>
    </citation>
    <scope>NUCLEOTIDE SEQUENCE [MRNA] (ISOFORM 3)</scope>
</reference>
<reference key="6">
    <citation type="journal article" date="2001" name="Nature">
        <title>The DNA sequence and comparative analysis of human chromosome 20.</title>
        <authorList>
            <person name="Deloukas P."/>
            <person name="Matthews L.H."/>
            <person name="Ashurst J.L."/>
            <person name="Burton J."/>
            <person name="Gilbert J.G.R."/>
            <person name="Jones M."/>
            <person name="Stavrides G."/>
            <person name="Almeida J.P."/>
            <person name="Babbage A.K."/>
            <person name="Bagguley C.L."/>
            <person name="Bailey J."/>
            <person name="Barlow K.F."/>
            <person name="Bates K.N."/>
            <person name="Beard L.M."/>
            <person name="Beare D.M."/>
            <person name="Beasley O.P."/>
            <person name="Bird C.P."/>
            <person name="Blakey S.E."/>
            <person name="Bridgeman A.M."/>
            <person name="Brown A.J."/>
            <person name="Buck D."/>
            <person name="Burrill W.D."/>
            <person name="Butler A.P."/>
            <person name="Carder C."/>
            <person name="Carter N.P."/>
            <person name="Chapman J.C."/>
            <person name="Clamp M."/>
            <person name="Clark G."/>
            <person name="Clark L.N."/>
            <person name="Clark S.Y."/>
            <person name="Clee C.M."/>
            <person name="Clegg S."/>
            <person name="Cobley V.E."/>
            <person name="Collier R.E."/>
            <person name="Connor R.E."/>
            <person name="Corby N.R."/>
            <person name="Coulson A."/>
            <person name="Coville G.J."/>
            <person name="Deadman R."/>
            <person name="Dhami P.D."/>
            <person name="Dunn M."/>
            <person name="Ellington A.G."/>
            <person name="Frankland J.A."/>
            <person name="Fraser A."/>
            <person name="French L."/>
            <person name="Garner P."/>
            <person name="Grafham D.V."/>
            <person name="Griffiths C."/>
            <person name="Griffiths M.N.D."/>
            <person name="Gwilliam R."/>
            <person name="Hall R.E."/>
            <person name="Hammond S."/>
            <person name="Harley J.L."/>
            <person name="Heath P.D."/>
            <person name="Ho S."/>
            <person name="Holden J.L."/>
            <person name="Howden P.J."/>
            <person name="Huckle E."/>
            <person name="Hunt A.R."/>
            <person name="Hunt S.E."/>
            <person name="Jekosch K."/>
            <person name="Johnson C.M."/>
            <person name="Johnson D."/>
            <person name="Kay M.P."/>
            <person name="Kimberley A.M."/>
            <person name="King A."/>
            <person name="Knights A."/>
            <person name="Laird G.K."/>
            <person name="Lawlor S."/>
            <person name="Lehvaeslaiho M.H."/>
            <person name="Leversha M.A."/>
            <person name="Lloyd C."/>
            <person name="Lloyd D.M."/>
            <person name="Lovell J.D."/>
            <person name="Marsh V.L."/>
            <person name="Martin S.L."/>
            <person name="McConnachie L.J."/>
            <person name="McLay K."/>
            <person name="McMurray A.A."/>
            <person name="Milne S.A."/>
            <person name="Mistry D."/>
            <person name="Moore M.J.F."/>
            <person name="Mullikin J.C."/>
            <person name="Nickerson T."/>
            <person name="Oliver K."/>
            <person name="Parker A."/>
            <person name="Patel R."/>
            <person name="Pearce T.A.V."/>
            <person name="Peck A.I."/>
            <person name="Phillimore B.J.C.T."/>
            <person name="Prathalingam S.R."/>
            <person name="Plumb R.W."/>
            <person name="Ramsay H."/>
            <person name="Rice C.M."/>
            <person name="Ross M.T."/>
            <person name="Scott C.E."/>
            <person name="Sehra H.K."/>
            <person name="Shownkeen R."/>
            <person name="Sims S."/>
            <person name="Skuce C.D."/>
            <person name="Smith M.L."/>
            <person name="Soderlund C."/>
            <person name="Steward C.A."/>
            <person name="Sulston J.E."/>
            <person name="Swann R.M."/>
            <person name="Sycamore N."/>
            <person name="Taylor R."/>
            <person name="Tee L."/>
            <person name="Thomas D.W."/>
            <person name="Thorpe A."/>
            <person name="Tracey A."/>
            <person name="Tromans A.C."/>
            <person name="Vaudin M."/>
            <person name="Wall M."/>
            <person name="Wallis J.M."/>
            <person name="Whitehead S.L."/>
            <person name="Whittaker P."/>
            <person name="Willey D.L."/>
            <person name="Williams L."/>
            <person name="Williams S.A."/>
            <person name="Wilming L."/>
            <person name="Wray P.W."/>
            <person name="Hubbard T."/>
            <person name="Durbin R.M."/>
            <person name="Bentley D.R."/>
            <person name="Beck S."/>
            <person name="Rogers J."/>
        </authorList>
    </citation>
    <scope>NUCLEOTIDE SEQUENCE [LARGE SCALE GENOMIC DNA]</scope>
</reference>
<reference key="7">
    <citation type="journal article" date="2004" name="Genome Res.">
        <title>The status, quality, and expansion of the NIH full-length cDNA project: the Mammalian Gene Collection (MGC).</title>
        <authorList>
            <consortium name="The MGC Project Team"/>
        </authorList>
    </citation>
    <scope>NUCLEOTIDE SEQUENCE [LARGE SCALE MRNA] (ISOFORM 1)</scope>
</reference>